<name>SET1_CRYNB</name>
<gene>
    <name type="primary">SET1</name>
    <name type="ordered locus">CNBD2720</name>
</gene>
<sequence length="1469" mass="163056">MAPHEKGVNPSESPSGSLKKAPPSGPKALRGFASPSAFRNAGIGNGLLQHRGEDERISFAFPRKGKESLDRNGERPAPMSLESRLGPPVSRFNRPVGGDSLERGNGKGGWDNRDERTSASSSSIHRINKEKIRPRSDFIESSANLYSEDDRNRDRGRYHERDRSRGTNGDRGGGEGHSHREPGRGKEHQNGQGRDRSLYRDHSRERESSRDERDRYSEEYKHQRSKARFSPSPSPERSRLKSSLGRHRSPVSVSSSSSSSARSPPPVQNREPLRYNGSQSKNGEKELSNGLLENSISRSGVSIAVPRKLETKQLVRPSPPHVNLKSTIQDNPSPPTGKYPPSPPSLDILSKPSCNREPLPDQRPPTPPLPENSSPTSPSLESSRFDQNQHLLPDELPLPPLSISFPQKPVSSSSLSRLSSLSAALSRPNPLDKDGTSMPPSFHFREISNRHQRLSPPNNAENQLPETSIIPPPPSETVPEPPWIRPPYIPPPCTKHRPGIGNFFITNLREKVEDKSGKEEKRVDGMEGGKVVQVTDPRLSMTEEQRGRGRGSSKQRAAFYELTYEWDLYSVTPKPPSPPTAVLITGLGPLTTVDQITKFLRPHGRIKEIDSKVDRKTDMQLGICWVKFEGPPLGRPGTAHDVASMAVKVCDGKKISMGGERIRVVLDGRGKRAEQAVKEEMERRYPPKKPSALPSDMKVTPLSGTAMATTSRPPNAPNASTPLIDKQTFDTSAKAPIIRPGVLKPLGQKMYHRPSAPPLVFNNHRFRDESFLNRPFNAGAGMISQQQMGYKILPGKPVQQLASSFTSAPFVRHPRERREDSWTNERGRRLKGESSTRHWRARSLSRSSYSSYSSYSSYSEESEEERPRHPTKVPYPQRKRLATGPSKEDEYKMEDVREAIRENGHPCVFIDAKSLPAAREYESRQSHLGWYILFADDTTAYRVQRVLDTTAVQGHRLSLVVHTSSGPRAQTDASEPVTGGVGESKKGNWRYLTITKKSRPMPAVKKSGKSATIRRKVYSPSVSGSDDDDEQVPVMAQNRKRAPSYASSTSPLSEDDRPFARSVQREERDIDKEGKFSLIGKKADVVSVKAAKGPKSKTIRVDSDEVEENQGVPLASIGEVTKAEGKQDDSTVVKLETLLSESISELTKGKKRPTKAKGGKATKKVRLDQEADDAATKIQIDEDIVPQPPKKKKVVKTEVDKLLASGVLMDEEDAYWLGRVLAAQEDGLEPIWSDGEEDLVDEGHPLFHKSGAWRAEGWKKVAQVQKSRYLPQRNRAVVNSEDVGGITTGRTARLAGRDQHRQTAAVAANNTVESDLFAFNQLRIRKKQLRFARSAIEGYGLYAMETIHAGEMVCEYVGDLVRATVADVREQRYLKQGIGSSYLFRIDNDIVCDATFKGSVSRLINHSCDPSANAKIIKVNGQSKIVIYAERTLYPGEEILYDYKFPLESDPALRVPCLCGAATCRGWLN</sequence>
<proteinExistence type="inferred from homology"/>
<accession>P0CO27</accession>
<accession>Q55U33</accession>
<accession>Q5KIA9</accession>
<feature type="chain" id="PRO_0000410118" description="Histone-lysine N-methyltransferase, H3 lysine-4 specific">
    <location>
        <begin position="1"/>
        <end position="1469"/>
    </location>
</feature>
<feature type="domain" description="SET" evidence="4">
    <location>
        <begin position="1327"/>
        <end position="1444"/>
    </location>
</feature>
<feature type="domain" description="Post-SET" evidence="3">
    <location>
        <begin position="1453"/>
        <end position="1469"/>
    </location>
</feature>
<feature type="region of interest" description="Disordered" evidence="5">
    <location>
        <begin position="1"/>
        <end position="478"/>
    </location>
</feature>
<feature type="region of interest" description="Disordered" evidence="5">
    <location>
        <begin position="676"/>
        <end position="699"/>
    </location>
</feature>
<feature type="region of interest" description="Disordered" evidence="5">
    <location>
        <begin position="805"/>
        <end position="839"/>
    </location>
</feature>
<feature type="region of interest" description="Disordered" evidence="5">
    <location>
        <begin position="858"/>
        <end position="891"/>
    </location>
</feature>
<feature type="region of interest" description="Disordered" evidence="5">
    <location>
        <begin position="963"/>
        <end position="984"/>
    </location>
</feature>
<feature type="region of interest" description="Disordered" evidence="5">
    <location>
        <begin position="999"/>
        <end position="1068"/>
    </location>
</feature>
<feature type="compositionally biased region" description="Basic and acidic residues" evidence="5">
    <location>
        <begin position="64"/>
        <end position="74"/>
    </location>
</feature>
<feature type="compositionally biased region" description="Basic and acidic residues" evidence="5">
    <location>
        <begin position="100"/>
        <end position="117"/>
    </location>
</feature>
<feature type="compositionally biased region" description="Basic and acidic residues" evidence="5">
    <location>
        <begin position="127"/>
        <end position="138"/>
    </location>
</feature>
<feature type="compositionally biased region" description="Basic and acidic residues" evidence="5">
    <location>
        <begin position="148"/>
        <end position="165"/>
    </location>
</feature>
<feature type="compositionally biased region" description="Basic and acidic residues" evidence="5">
    <location>
        <begin position="172"/>
        <end position="222"/>
    </location>
</feature>
<feature type="compositionally biased region" description="Low complexity" evidence="5">
    <location>
        <begin position="250"/>
        <end position="262"/>
    </location>
</feature>
<feature type="compositionally biased region" description="Polar residues" evidence="5">
    <location>
        <begin position="291"/>
        <end position="300"/>
    </location>
</feature>
<feature type="compositionally biased region" description="Pro residues" evidence="5">
    <location>
        <begin position="332"/>
        <end position="344"/>
    </location>
</feature>
<feature type="compositionally biased region" description="Pro residues" evidence="5">
    <location>
        <begin position="361"/>
        <end position="370"/>
    </location>
</feature>
<feature type="compositionally biased region" description="Low complexity" evidence="5">
    <location>
        <begin position="371"/>
        <end position="382"/>
    </location>
</feature>
<feature type="compositionally biased region" description="Low complexity" evidence="5">
    <location>
        <begin position="411"/>
        <end position="427"/>
    </location>
</feature>
<feature type="compositionally biased region" description="Polar residues" evidence="5">
    <location>
        <begin position="455"/>
        <end position="464"/>
    </location>
</feature>
<feature type="compositionally biased region" description="Basic and acidic residues" evidence="5">
    <location>
        <begin position="676"/>
        <end position="685"/>
    </location>
</feature>
<feature type="compositionally biased region" description="Basic and acidic residues" evidence="5">
    <location>
        <begin position="816"/>
        <end position="836"/>
    </location>
</feature>
<feature type="compositionally biased region" description="Polar residues" evidence="5">
    <location>
        <begin position="963"/>
        <end position="973"/>
    </location>
</feature>
<feature type="compositionally biased region" description="Basic residues" evidence="5">
    <location>
        <begin position="1006"/>
        <end position="1017"/>
    </location>
</feature>
<feature type="compositionally biased region" description="Basic and acidic residues" evidence="5">
    <location>
        <begin position="1054"/>
        <end position="1068"/>
    </location>
</feature>
<feature type="binding site" evidence="4">
    <location>
        <position position="1443"/>
    </location>
    <ligand>
        <name>S-adenosyl-L-methionine</name>
        <dbReference type="ChEBI" id="CHEBI:59789"/>
    </ligand>
</feature>
<keyword id="KW-0156">Chromatin regulator</keyword>
<keyword id="KW-0158">Chromosome</keyword>
<keyword id="KW-0489">Methyltransferase</keyword>
<keyword id="KW-0539">Nucleus</keyword>
<keyword id="KW-0949">S-adenosyl-L-methionine</keyword>
<keyword id="KW-0808">Transferase</keyword>
<organism>
    <name type="scientific">Cryptococcus neoformans var. neoformans serotype D (strain B-3501A)</name>
    <name type="common">Filobasidiella neoformans</name>
    <dbReference type="NCBI Taxonomy" id="283643"/>
    <lineage>
        <taxon>Eukaryota</taxon>
        <taxon>Fungi</taxon>
        <taxon>Dikarya</taxon>
        <taxon>Basidiomycota</taxon>
        <taxon>Agaricomycotina</taxon>
        <taxon>Tremellomycetes</taxon>
        <taxon>Tremellales</taxon>
        <taxon>Cryptococcaceae</taxon>
        <taxon>Cryptococcus</taxon>
        <taxon>Cryptococcus neoformans species complex</taxon>
    </lineage>
</organism>
<protein>
    <recommendedName>
        <fullName>Histone-lysine N-methyltransferase, H3 lysine-4 specific</fullName>
        <ecNumber evidence="2">2.1.1.354</ecNumber>
    </recommendedName>
    <alternativeName>
        <fullName>COMPASS component SET1</fullName>
    </alternativeName>
    <alternativeName>
        <fullName>SET domain-containing protein 1</fullName>
    </alternativeName>
</protein>
<reference key="1">
    <citation type="journal article" date="2005" name="Science">
        <title>The genome of the basidiomycetous yeast and human pathogen Cryptococcus neoformans.</title>
        <authorList>
            <person name="Loftus B.J."/>
            <person name="Fung E."/>
            <person name="Roncaglia P."/>
            <person name="Rowley D."/>
            <person name="Amedeo P."/>
            <person name="Bruno D."/>
            <person name="Vamathevan J."/>
            <person name="Miranda M."/>
            <person name="Anderson I.J."/>
            <person name="Fraser J.A."/>
            <person name="Allen J.E."/>
            <person name="Bosdet I.E."/>
            <person name="Brent M.R."/>
            <person name="Chiu R."/>
            <person name="Doering T.L."/>
            <person name="Donlin M.J."/>
            <person name="D'Souza C.A."/>
            <person name="Fox D.S."/>
            <person name="Grinberg V."/>
            <person name="Fu J."/>
            <person name="Fukushima M."/>
            <person name="Haas B.J."/>
            <person name="Huang J.C."/>
            <person name="Janbon G."/>
            <person name="Jones S.J.M."/>
            <person name="Koo H.L."/>
            <person name="Krzywinski M.I."/>
            <person name="Kwon-Chung K.J."/>
            <person name="Lengeler K.B."/>
            <person name="Maiti R."/>
            <person name="Marra M.A."/>
            <person name="Marra R.E."/>
            <person name="Mathewson C.A."/>
            <person name="Mitchell T.G."/>
            <person name="Pertea M."/>
            <person name="Riggs F.R."/>
            <person name="Salzberg S.L."/>
            <person name="Schein J.E."/>
            <person name="Shvartsbeyn A."/>
            <person name="Shin H."/>
            <person name="Shumway M."/>
            <person name="Specht C.A."/>
            <person name="Suh B.B."/>
            <person name="Tenney A."/>
            <person name="Utterback T.R."/>
            <person name="Wickes B.L."/>
            <person name="Wortman J.R."/>
            <person name="Wye N.H."/>
            <person name="Kronstad J.W."/>
            <person name="Lodge J.K."/>
            <person name="Heitman J."/>
            <person name="Davis R.W."/>
            <person name="Fraser C.M."/>
            <person name="Hyman R.W."/>
        </authorList>
    </citation>
    <scope>NUCLEOTIDE SEQUENCE [LARGE SCALE GENOMIC DNA]</scope>
    <source>
        <strain>B-3501A</strain>
    </source>
</reference>
<dbReference type="EC" id="2.1.1.354" evidence="2"/>
<dbReference type="EMBL" id="AAEY01000020">
    <property type="protein sequence ID" value="EAL21216.1"/>
    <property type="status" value="ALT_SEQ"/>
    <property type="molecule type" value="Genomic_DNA"/>
</dbReference>
<dbReference type="RefSeq" id="XP_775863.1">
    <property type="nucleotide sequence ID" value="XM_770770.1"/>
</dbReference>
<dbReference type="SMR" id="P0CO27"/>
<dbReference type="GeneID" id="4935661"/>
<dbReference type="KEGG" id="cnb:CNBD2720"/>
<dbReference type="HOGENOM" id="CLU_004389_0_0_1"/>
<dbReference type="OrthoDB" id="9444at5206"/>
<dbReference type="GO" id="GO:0005694">
    <property type="term" value="C:chromosome"/>
    <property type="evidence" value="ECO:0007669"/>
    <property type="project" value="UniProtKB-SubCell"/>
</dbReference>
<dbReference type="GO" id="GO:0048188">
    <property type="term" value="C:Set1C/COMPASS complex"/>
    <property type="evidence" value="ECO:0000250"/>
    <property type="project" value="UniProtKB"/>
</dbReference>
<dbReference type="GO" id="GO:0140999">
    <property type="term" value="F:histone H3K4 trimethyltransferase activity"/>
    <property type="evidence" value="ECO:0007669"/>
    <property type="project" value="UniProtKB-EC"/>
</dbReference>
<dbReference type="GO" id="GO:0003723">
    <property type="term" value="F:RNA binding"/>
    <property type="evidence" value="ECO:0000250"/>
    <property type="project" value="UniProtKB"/>
</dbReference>
<dbReference type="GO" id="GO:0032259">
    <property type="term" value="P:methylation"/>
    <property type="evidence" value="ECO:0007669"/>
    <property type="project" value="UniProtKB-KW"/>
</dbReference>
<dbReference type="CDD" id="cd12303">
    <property type="entry name" value="RRM_spSet1p_like"/>
    <property type="match status" value="1"/>
</dbReference>
<dbReference type="Gene3D" id="3.30.70.330">
    <property type="match status" value="1"/>
</dbReference>
<dbReference type="Gene3D" id="2.170.270.10">
    <property type="entry name" value="SET domain"/>
    <property type="match status" value="1"/>
</dbReference>
<dbReference type="InterPro" id="IPR024657">
    <property type="entry name" value="COMPASS_Set1_N-SET"/>
</dbReference>
<dbReference type="InterPro" id="IPR012677">
    <property type="entry name" value="Nucleotide-bd_a/b_plait_sf"/>
</dbReference>
<dbReference type="InterPro" id="IPR003616">
    <property type="entry name" value="Post-SET_dom"/>
</dbReference>
<dbReference type="InterPro" id="IPR035979">
    <property type="entry name" value="RBD_domain_sf"/>
</dbReference>
<dbReference type="InterPro" id="IPR044570">
    <property type="entry name" value="Set1-like"/>
</dbReference>
<dbReference type="InterPro" id="IPR001214">
    <property type="entry name" value="SET_dom"/>
</dbReference>
<dbReference type="InterPro" id="IPR046341">
    <property type="entry name" value="SET_dom_sf"/>
</dbReference>
<dbReference type="PANTHER" id="PTHR45814">
    <property type="entry name" value="HISTONE-LYSINE N-METHYLTRANSFERASE SETD1"/>
    <property type="match status" value="1"/>
</dbReference>
<dbReference type="PANTHER" id="PTHR45814:SF2">
    <property type="entry name" value="HISTONE-LYSINE N-METHYLTRANSFERASE SETD1"/>
    <property type="match status" value="1"/>
</dbReference>
<dbReference type="Pfam" id="PF00856">
    <property type="entry name" value="SET"/>
    <property type="match status" value="1"/>
</dbReference>
<dbReference type="SMART" id="SM01291">
    <property type="entry name" value="N-SET"/>
    <property type="match status" value="1"/>
</dbReference>
<dbReference type="SMART" id="SM00508">
    <property type="entry name" value="PostSET"/>
    <property type="match status" value="1"/>
</dbReference>
<dbReference type="SMART" id="SM00317">
    <property type="entry name" value="SET"/>
    <property type="match status" value="1"/>
</dbReference>
<dbReference type="SUPFAM" id="SSF54928">
    <property type="entry name" value="RNA-binding domain, RBD"/>
    <property type="match status" value="1"/>
</dbReference>
<dbReference type="SUPFAM" id="SSF82199">
    <property type="entry name" value="SET domain"/>
    <property type="match status" value="1"/>
</dbReference>
<dbReference type="PROSITE" id="PS50868">
    <property type="entry name" value="POST_SET"/>
    <property type="match status" value="1"/>
</dbReference>
<dbReference type="PROSITE" id="PS50280">
    <property type="entry name" value="SET"/>
    <property type="match status" value="1"/>
</dbReference>
<evidence type="ECO:0000250" key="1">
    <source>
        <dbReference type="UniProtKB" id="P38827"/>
    </source>
</evidence>
<evidence type="ECO:0000250" key="2">
    <source>
        <dbReference type="UniProtKB" id="Q9Y7R4"/>
    </source>
</evidence>
<evidence type="ECO:0000255" key="3">
    <source>
        <dbReference type="PROSITE-ProRule" id="PRU00155"/>
    </source>
</evidence>
<evidence type="ECO:0000255" key="4">
    <source>
        <dbReference type="PROSITE-ProRule" id="PRU00190"/>
    </source>
</evidence>
<evidence type="ECO:0000256" key="5">
    <source>
        <dbReference type="SAM" id="MobiDB-lite"/>
    </source>
</evidence>
<evidence type="ECO:0000305" key="6"/>
<comment type="function">
    <text evidence="1">Catalytic component of the COMPASS (Set1C) complex that specifically mono-, di- and trimethylates histone H3 to form H3K4me1/2/3. Binds RNAs which might negatively affect its histone methyltransferase activity. COMPASS recognizes ubiquitinated H2B on one face of the nucleosome which stimulates the methylation of H3 on the opposing face.</text>
</comment>
<comment type="catalytic activity">
    <reaction evidence="1">
        <text>L-lysyl(4)-[histone H3] + 3 S-adenosyl-L-methionine = N(6),N(6),N(6)-trimethyl-L-lysyl(4)-[histone H3] + 3 S-adenosyl-L-homocysteine + 3 H(+)</text>
        <dbReference type="Rhea" id="RHEA:60260"/>
        <dbReference type="Rhea" id="RHEA-COMP:15537"/>
        <dbReference type="Rhea" id="RHEA-COMP:15547"/>
        <dbReference type="ChEBI" id="CHEBI:15378"/>
        <dbReference type="ChEBI" id="CHEBI:29969"/>
        <dbReference type="ChEBI" id="CHEBI:57856"/>
        <dbReference type="ChEBI" id="CHEBI:59789"/>
        <dbReference type="ChEBI" id="CHEBI:61961"/>
        <dbReference type="EC" id="2.1.1.354"/>
    </reaction>
</comment>
<comment type="catalytic activity">
    <reaction evidence="1">
        <text>N(6)-methyl-L-lysyl(4)-[histone H3] + S-adenosyl-L-methionine = N(6),N(6)-dimethyl-L-lysyl(4)-[histone H3] + S-adenosyl-L-homocysteine + H(+)</text>
        <dbReference type="Rhea" id="RHEA:60268"/>
        <dbReference type="Rhea" id="RHEA-COMP:15540"/>
        <dbReference type="Rhea" id="RHEA-COMP:15543"/>
        <dbReference type="ChEBI" id="CHEBI:15378"/>
        <dbReference type="ChEBI" id="CHEBI:57856"/>
        <dbReference type="ChEBI" id="CHEBI:59789"/>
        <dbReference type="ChEBI" id="CHEBI:61929"/>
        <dbReference type="ChEBI" id="CHEBI:61976"/>
    </reaction>
</comment>
<comment type="catalytic activity">
    <reaction evidence="1">
        <text>N(6),N(6)-dimethyl-L-lysyl(4)-[histone H3] + S-adenosyl-L-methionine = N(6),N(6),N(6)-trimethyl-L-lysyl(4)-[histone H3] + S-adenosyl-L-homocysteine + H(+)</text>
        <dbReference type="Rhea" id="RHEA:60272"/>
        <dbReference type="Rhea" id="RHEA-COMP:15537"/>
        <dbReference type="Rhea" id="RHEA-COMP:15540"/>
        <dbReference type="ChEBI" id="CHEBI:15378"/>
        <dbReference type="ChEBI" id="CHEBI:57856"/>
        <dbReference type="ChEBI" id="CHEBI:59789"/>
        <dbReference type="ChEBI" id="CHEBI:61961"/>
        <dbReference type="ChEBI" id="CHEBI:61976"/>
    </reaction>
</comment>
<comment type="subunit">
    <text evidence="1">Component of the Set1C/COMPASS complex.</text>
</comment>
<comment type="subcellular location">
    <subcellularLocation>
        <location evidence="6">Nucleus</location>
    </subcellularLocation>
    <subcellularLocation>
        <location evidence="6">Chromosome</location>
    </subcellularLocation>
</comment>
<comment type="similarity">
    <text evidence="4">Belongs to the class V-like SAM-binding methyltransferase superfamily.</text>
</comment>
<comment type="sequence caution" evidence="6">
    <conflict type="erroneous gene model prediction">
        <sequence resource="EMBL-CDS" id="EAL21216"/>
    </conflict>
</comment>